<reference key="1">
    <citation type="journal article" date="2010" name="J. Proteome Res.">
        <title>Molecular diversification of peptide toxins from the tarantula Haplopelma hainanum (Ornithoctonus hainana) venom based on transcriptomic, peptidomic, and genomic analyses.</title>
        <authorList>
            <person name="Tang X."/>
            <person name="Zhang Y."/>
            <person name="Hu W."/>
            <person name="Xu D."/>
            <person name="Tao H."/>
            <person name="Yang X."/>
            <person name="Li Y."/>
            <person name="Jiang L."/>
            <person name="Liang S."/>
        </authorList>
    </citation>
    <scope>NUCLEOTIDE SEQUENCE [LARGE SCALE MRNA]</scope>
    <source>
        <tissue>Venom gland</tissue>
    </source>
</reference>
<dbReference type="EMBL" id="GU292876">
    <property type="protein sequence ID" value="ADB56692.1"/>
    <property type="molecule type" value="mRNA"/>
</dbReference>
<dbReference type="SMR" id="D2Y1Z9"/>
<dbReference type="ArachnoServer" id="AS001842">
    <property type="toxin name" value="mu-theraphotoxin-Hhn2c"/>
</dbReference>
<dbReference type="GO" id="GO:0005576">
    <property type="term" value="C:extracellular region"/>
    <property type="evidence" value="ECO:0007669"/>
    <property type="project" value="UniProtKB-SubCell"/>
</dbReference>
<dbReference type="GO" id="GO:0044231">
    <property type="term" value="C:host cell presynaptic membrane"/>
    <property type="evidence" value="ECO:0007669"/>
    <property type="project" value="UniProtKB-KW"/>
</dbReference>
<dbReference type="GO" id="GO:0008200">
    <property type="term" value="F:ion channel inhibitor activity"/>
    <property type="evidence" value="ECO:0007669"/>
    <property type="project" value="InterPro"/>
</dbReference>
<dbReference type="GO" id="GO:0017080">
    <property type="term" value="F:sodium channel regulator activity"/>
    <property type="evidence" value="ECO:0007669"/>
    <property type="project" value="UniProtKB-KW"/>
</dbReference>
<dbReference type="GO" id="GO:0090729">
    <property type="term" value="F:toxin activity"/>
    <property type="evidence" value="ECO:0007669"/>
    <property type="project" value="UniProtKB-KW"/>
</dbReference>
<dbReference type="InterPro" id="IPR011696">
    <property type="entry name" value="Huwentoxin-1"/>
</dbReference>
<dbReference type="InterPro" id="IPR013140">
    <property type="entry name" value="Huwentoxin_CS1"/>
</dbReference>
<dbReference type="Pfam" id="PF07740">
    <property type="entry name" value="Toxin_12"/>
    <property type="match status" value="1"/>
</dbReference>
<dbReference type="SUPFAM" id="SSF57059">
    <property type="entry name" value="omega toxin-like"/>
    <property type="match status" value="1"/>
</dbReference>
<dbReference type="PROSITE" id="PS60021">
    <property type="entry name" value="HWTX_1"/>
    <property type="match status" value="1"/>
</dbReference>
<proteinExistence type="evidence at transcript level"/>
<name>H3J01_CYRHA</name>
<comment type="function">
    <text evidence="1">Lethal neurotoxin. Selectively blocks tetrodotoxin-sensitive voltage-gated sodium channels (Nav). Does not affect tetrodotoxin-resistant voltage-gated sodium channels or calcium channels (By similarity).</text>
</comment>
<comment type="subunit">
    <text evidence="1">Monomer.</text>
</comment>
<comment type="subcellular location">
    <subcellularLocation>
        <location evidence="1">Secreted</location>
    </subcellularLocation>
</comment>
<comment type="tissue specificity">
    <text>Expressed by the venom gland.</text>
</comment>
<comment type="domain">
    <text evidence="1">The presence of a 'disulfide through disulfide knot' structurally defines this protein as a knottin.</text>
</comment>
<comment type="similarity">
    <text evidence="3">Belongs to the neurotoxin 10 (Hwtx-1) family. 15 (Hntx-3) subfamily.</text>
</comment>
<sequence length="83" mass="9107">MKASMFLALAGLVLLFVVGYASESEEKEFPIELLSKIFAVDVFKGEERGCKGFGDSCAPGKNECCPNHACSNKHKWCKVYLGK</sequence>
<keyword id="KW-0027">Amidation</keyword>
<keyword id="KW-1015">Disulfide bond</keyword>
<keyword id="KW-0872">Ion channel impairing toxin</keyword>
<keyword id="KW-0960">Knottin</keyword>
<keyword id="KW-0528">Neurotoxin</keyword>
<keyword id="KW-0638">Presynaptic neurotoxin</keyword>
<keyword id="KW-0964">Secreted</keyword>
<keyword id="KW-0732">Signal</keyword>
<keyword id="KW-0800">Toxin</keyword>
<keyword id="KW-0738">Voltage-gated sodium channel impairing toxin</keyword>
<feature type="signal peptide" evidence="2">
    <location>
        <begin position="1"/>
        <end position="21"/>
    </location>
</feature>
<feature type="propeptide" id="PRO_0000400552" evidence="1">
    <location>
        <begin position="22"/>
        <end position="48"/>
    </location>
</feature>
<feature type="peptide" id="PRO_0000400553" description="Mu-theraphotoxin-Hhn2c">
    <location>
        <begin position="49"/>
        <end position="81"/>
    </location>
</feature>
<feature type="modified residue" description="Leucine amide" evidence="1">
    <location>
        <position position="81"/>
    </location>
</feature>
<feature type="disulfide bond" evidence="1">
    <location>
        <begin position="50"/>
        <end position="65"/>
    </location>
</feature>
<feature type="disulfide bond" evidence="1">
    <location>
        <begin position="57"/>
        <end position="70"/>
    </location>
</feature>
<feature type="disulfide bond" evidence="1">
    <location>
        <begin position="64"/>
        <end position="77"/>
    </location>
</feature>
<accession>D2Y1Z9</accession>
<protein>
    <recommendedName>
        <fullName>Mu-theraphotoxin-Hhn2c</fullName>
        <shortName>Mu-TRTX-Hhn2c</shortName>
    </recommendedName>
    <alternativeName>
        <fullName>Hainantoxin-III-10</fullName>
        <shortName>HNTX-III-10</shortName>
    </alternativeName>
</protein>
<evidence type="ECO:0000250" key="1"/>
<evidence type="ECO:0000255" key="2"/>
<evidence type="ECO:0000305" key="3"/>
<organism>
    <name type="scientific">Cyriopagopus hainanus</name>
    <name type="common">Chinese bird spider</name>
    <name type="synonym">Haplopelma hainanum</name>
    <dbReference type="NCBI Taxonomy" id="209901"/>
    <lineage>
        <taxon>Eukaryota</taxon>
        <taxon>Metazoa</taxon>
        <taxon>Ecdysozoa</taxon>
        <taxon>Arthropoda</taxon>
        <taxon>Chelicerata</taxon>
        <taxon>Arachnida</taxon>
        <taxon>Araneae</taxon>
        <taxon>Mygalomorphae</taxon>
        <taxon>Theraphosidae</taxon>
        <taxon>Haplopelma</taxon>
    </lineage>
</organism>